<proteinExistence type="inferred from homology"/>
<name>SAPF_SHIFL</name>
<dbReference type="EMBL" id="AE005674">
    <property type="protein sequence ID" value="AAN42906.1"/>
    <property type="molecule type" value="Genomic_DNA"/>
</dbReference>
<dbReference type="EMBL" id="AE014073">
    <property type="protein sequence ID" value="AAP16789.1"/>
    <property type="molecule type" value="Genomic_DNA"/>
</dbReference>
<dbReference type="RefSeq" id="NP_707199.1">
    <property type="nucleotide sequence ID" value="NC_004337.2"/>
</dbReference>
<dbReference type="RefSeq" id="WP_000573407.1">
    <property type="nucleotide sequence ID" value="NZ_WPGW01000009.1"/>
</dbReference>
<dbReference type="SMR" id="P0AAI0"/>
<dbReference type="STRING" id="198214.SF1295"/>
<dbReference type="PaxDb" id="198214-SF1295"/>
<dbReference type="GeneID" id="1024268"/>
<dbReference type="GeneID" id="93775415"/>
<dbReference type="KEGG" id="sfl:SF1295"/>
<dbReference type="KEGG" id="sfx:S1377"/>
<dbReference type="PATRIC" id="fig|198214.7.peg.1521"/>
<dbReference type="HOGENOM" id="CLU_000604_1_23_6"/>
<dbReference type="Proteomes" id="UP000001006">
    <property type="component" value="Chromosome"/>
</dbReference>
<dbReference type="Proteomes" id="UP000002673">
    <property type="component" value="Chromosome"/>
</dbReference>
<dbReference type="GO" id="GO:0005886">
    <property type="term" value="C:plasma membrane"/>
    <property type="evidence" value="ECO:0007669"/>
    <property type="project" value="UniProtKB-SubCell"/>
</dbReference>
<dbReference type="GO" id="GO:0005524">
    <property type="term" value="F:ATP binding"/>
    <property type="evidence" value="ECO:0007669"/>
    <property type="project" value="UniProtKB-KW"/>
</dbReference>
<dbReference type="GO" id="GO:0016887">
    <property type="term" value="F:ATP hydrolysis activity"/>
    <property type="evidence" value="ECO:0007669"/>
    <property type="project" value="InterPro"/>
</dbReference>
<dbReference type="GO" id="GO:0015833">
    <property type="term" value="P:peptide transport"/>
    <property type="evidence" value="ECO:0007669"/>
    <property type="project" value="UniProtKB-KW"/>
</dbReference>
<dbReference type="GO" id="GO:0015031">
    <property type="term" value="P:protein transport"/>
    <property type="evidence" value="ECO:0007669"/>
    <property type="project" value="UniProtKB-KW"/>
</dbReference>
<dbReference type="GO" id="GO:0055085">
    <property type="term" value="P:transmembrane transport"/>
    <property type="evidence" value="ECO:0007669"/>
    <property type="project" value="UniProtKB-ARBA"/>
</dbReference>
<dbReference type="CDD" id="cd03257">
    <property type="entry name" value="ABC_NikE_OppD_transporters"/>
    <property type="match status" value="1"/>
</dbReference>
<dbReference type="FunFam" id="3.40.50.300:FF:000301">
    <property type="entry name" value="Peptide transport system ATP-binding protein sapF"/>
    <property type="match status" value="1"/>
</dbReference>
<dbReference type="Gene3D" id="3.40.50.300">
    <property type="entry name" value="P-loop containing nucleotide triphosphate hydrolases"/>
    <property type="match status" value="1"/>
</dbReference>
<dbReference type="InterPro" id="IPR003593">
    <property type="entry name" value="AAA+_ATPase"/>
</dbReference>
<dbReference type="InterPro" id="IPR050319">
    <property type="entry name" value="ABC_transp_ATP-bind"/>
</dbReference>
<dbReference type="InterPro" id="IPR003439">
    <property type="entry name" value="ABC_transporter-like_ATP-bd"/>
</dbReference>
<dbReference type="InterPro" id="IPR017871">
    <property type="entry name" value="ABC_transporter-like_CS"/>
</dbReference>
<dbReference type="InterPro" id="IPR027417">
    <property type="entry name" value="P-loop_NTPase"/>
</dbReference>
<dbReference type="NCBIfam" id="NF011692">
    <property type="entry name" value="PRK15112.1"/>
    <property type="match status" value="1"/>
</dbReference>
<dbReference type="PANTHER" id="PTHR43776:SF4">
    <property type="entry name" value="PUTRESCINE EXPORT SYSTEM ATP-BINDING PROTEIN SAPF"/>
    <property type="match status" value="1"/>
</dbReference>
<dbReference type="PANTHER" id="PTHR43776">
    <property type="entry name" value="TRANSPORT ATP-BINDING PROTEIN"/>
    <property type="match status" value="1"/>
</dbReference>
<dbReference type="Pfam" id="PF00005">
    <property type="entry name" value="ABC_tran"/>
    <property type="match status" value="1"/>
</dbReference>
<dbReference type="SMART" id="SM00382">
    <property type="entry name" value="AAA"/>
    <property type="match status" value="1"/>
</dbReference>
<dbReference type="SUPFAM" id="SSF52540">
    <property type="entry name" value="P-loop containing nucleoside triphosphate hydrolases"/>
    <property type="match status" value="1"/>
</dbReference>
<dbReference type="PROSITE" id="PS00211">
    <property type="entry name" value="ABC_TRANSPORTER_1"/>
    <property type="match status" value="1"/>
</dbReference>
<dbReference type="PROSITE" id="PS50893">
    <property type="entry name" value="ABC_TRANSPORTER_2"/>
    <property type="match status" value="1"/>
</dbReference>
<organism>
    <name type="scientific">Shigella flexneri</name>
    <dbReference type="NCBI Taxonomy" id="623"/>
    <lineage>
        <taxon>Bacteria</taxon>
        <taxon>Pseudomonadati</taxon>
        <taxon>Pseudomonadota</taxon>
        <taxon>Gammaproteobacteria</taxon>
        <taxon>Enterobacterales</taxon>
        <taxon>Enterobacteriaceae</taxon>
        <taxon>Shigella</taxon>
    </lineage>
</organism>
<feature type="chain" id="PRO_0000092971" description="Peptide transport system ATP-binding protein SapF">
    <location>
        <begin position="1"/>
        <end position="268"/>
    </location>
</feature>
<feature type="domain" description="ABC transporter" evidence="2">
    <location>
        <begin position="6"/>
        <end position="251"/>
    </location>
</feature>
<feature type="binding site" evidence="2">
    <location>
        <begin position="47"/>
        <end position="54"/>
    </location>
    <ligand>
        <name>ATP</name>
        <dbReference type="ChEBI" id="CHEBI:30616"/>
    </ligand>
</feature>
<keyword id="KW-0067">ATP-binding</keyword>
<keyword id="KW-0997">Cell inner membrane</keyword>
<keyword id="KW-1003">Cell membrane</keyword>
<keyword id="KW-0472">Membrane</keyword>
<keyword id="KW-0547">Nucleotide-binding</keyword>
<keyword id="KW-0571">Peptide transport</keyword>
<keyword id="KW-0653">Protein transport</keyword>
<keyword id="KW-1185">Reference proteome</keyword>
<keyword id="KW-0813">Transport</keyword>
<protein>
    <recommendedName>
        <fullName>Peptide transport system ATP-binding protein SapF</fullName>
    </recommendedName>
</protein>
<sequence>MIETLLEVRNLSKTFRYRTGWFRRQTVEAVKPLSFTLREGQTLAIIGENGSGKSTLAKMLAGMIEPTSGELLIDDHPLHFGDYSFRSQRIRMIFQDPSTSLNPRQRISQILDFPLRLNTDLEPEQRRKQIIETMRMVGLLPDHVSYYPHMLAPGQKQRLGLARALILRPKVIIADEALASLDMSMRSQLINLMLELQEKQGISYIYVTQHIGMMKHISDQVLVMHQGEVVERGSTADVLASPLHELTKRLIAGHFGEALTADAWRKDR</sequence>
<reference key="1">
    <citation type="journal article" date="2002" name="Nucleic Acids Res.">
        <title>Genome sequence of Shigella flexneri 2a: insights into pathogenicity through comparison with genomes of Escherichia coli K12 and O157.</title>
        <authorList>
            <person name="Jin Q."/>
            <person name="Yuan Z."/>
            <person name="Xu J."/>
            <person name="Wang Y."/>
            <person name="Shen Y."/>
            <person name="Lu W."/>
            <person name="Wang J."/>
            <person name="Liu H."/>
            <person name="Yang J."/>
            <person name="Yang F."/>
            <person name="Zhang X."/>
            <person name="Zhang J."/>
            <person name="Yang G."/>
            <person name="Wu H."/>
            <person name="Qu D."/>
            <person name="Dong J."/>
            <person name="Sun L."/>
            <person name="Xue Y."/>
            <person name="Zhao A."/>
            <person name="Gao Y."/>
            <person name="Zhu J."/>
            <person name="Kan B."/>
            <person name="Ding K."/>
            <person name="Chen S."/>
            <person name="Cheng H."/>
            <person name="Yao Z."/>
            <person name="He B."/>
            <person name="Chen R."/>
            <person name="Ma D."/>
            <person name="Qiang B."/>
            <person name="Wen Y."/>
            <person name="Hou Y."/>
            <person name="Yu J."/>
        </authorList>
    </citation>
    <scope>NUCLEOTIDE SEQUENCE [LARGE SCALE GENOMIC DNA]</scope>
    <source>
        <strain>301 / Serotype 2a</strain>
    </source>
</reference>
<reference key="2">
    <citation type="journal article" date="2003" name="Infect. Immun.">
        <title>Complete genome sequence and comparative genomics of Shigella flexneri serotype 2a strain 2457T.</title>
        <authorList>
            <person name="Wei J."/>
            <person name="Goldberg M.B."/>
            <person name="Burland V."/>
            <person name="Venkatesan M.M."/>
            <person name="Deng W."/>
            <person name="Fournier G."/>
            <person name="Mayhew G.F."/>
            <person name="Plunkett G. III"/>
            <person name="Rose D.J."/>
            <person name="Darling A."/>
            <person name="Mau B."/>
            <person name="Perna N.T."/>
            <person name="Payne S.M."/>
            <person name="Runyen-Janecky L.J."/>
            <person name="Zhou S."/>
            <person name="Schwartz D.C."/>
            <person name="Blattner F.R."/>
        </authorList>
    </citation>
    <scope>NUCLEOTIDE SEQUENCE [LARGE SCALE GENOMIC DNA]</scope>
    <source>
        <strain>ATCC 700930 / 2457T / Serotype 2a</strain>
    </source>
</reference>
<evidence type="ECO:0000250" key="1"/>
<evidence type="ECO:0000255" key="2">
    <source>
        <dbReference type="PROSITE-ProRule" id="PRU00434"/>
    </source>
</evidence>
<evidence type="ECO:0000305" key="3"/>
<accession>P0AAI0</accession>
<accession>P36637</accession>
<gene>
    <name type="primary">sapF</name>
    <name type="ordered locus">SF1295</name>
    <name type="ordered locus">S1377</name>
</gene>
<comment type="function">
    <text evidence="1">Involved in a peptide intake transport system that plays a role in the resistance to antimicrobial peptides.</text>
</comment>
<comment type="subcellular location">
    <subcellularLocation>
        <location evidence="3">Cell inner membrane</location>
        <topology evidence="3">Peripheral membrane protein</topology>
    </subcellularLocation>
</comment>
<comment type="similarity">
    <text evidence="3">Belongs to the ABC transporter superfamily.</text>
</comment>